<keyword id="KW-0687">Ribonucleoprotein</keyword>
<keyword id="KW-0689">Ribosomal protein</keyword>
<sequence>MAHKKGVGSSRNGRDSNPKYLGVKLFGGQAIEAGNIIIRQRGTQFHAGDGVGLGRDHTLFALVNGTVEFSIKGPKKRRTVNVIPA</sequence>
<gene>
    <name evidence="1" type="primary">rpmA</name>
    <name type="ordered locus">XfasM23_1526</name>
</gene>
<proteinExistence type="inferred from homology"/>
<dbReference type="EMBL" id="CP001011">
    <property type="protein sequence ID" value="ACB92934.1"/>
    <property type="molecule type" value="Genomic_DNA"/>
</dbReference>
<dbReference type="RefSeq" id="WP_004085949.1">
    <property type="nucleotide sequence ID" value="NC_010577.1"/>
</dbReference>
<dbReference type="SMR" id="B2I6V7"/>
<dbReference type="GeneID" id="93905263"/>
<dbReference type="KEGG" id="xfn:XfasM23_1526"/>
<dbReference type="HOGENOM" id="CLU_095424_4_0_6"/>
<dbReference type="Proteomes" id="UP000001698">
    <property type="component" value="Chromosome"/>
</dbReference>
<dbReference type="GO" id="GO:0022625">
    <property type="term" value="C:cytosolic large ribosomal subunit"/>
    <property type="evidence" value="ECO:0007669"/>
    <property type="project" value="TreeGrafter"/>
</dbReference>
<dbReference type="GO" id="GO:0003735">
    <property type="term" value="F:structural constituent of ribosome"/>
    <property type="evidence" value="ECO:0007669"/>
    <property type="project" value="InterPro"/>
</dbReference>
<dbReference type="GO" id="GO:0006412">
    <property type="term" value="P:translation"/>
    <property type="evidence" value="ECO:0007669"/>
    <property type="project" value="UniProtKB-UniRule"/>
</dbReference>
<dbReference type="FunFam" id="2.40.50.100:FF:000020">
    <property type="entry name" value="50S ribosomal protein L27"/>
    <property type="match status" value="1"/>
</dbReference>
<dbReference type="Gene3D" id="2.40.50.100">
    <property type="match status" value="1"/>
</dbReference>
<dbReference type="HAMAP" id="MF_00539">
    <property type="entry name" value="Ribosomal_bL27"/>
    <property type="match status" value="1"/>
</dbReference>
<dbReference type="InterPro" id="IPR001684">
    <property type="entry name" value="Ribosomal_bL27"/>
</dbReference>
<dbReference type="InterPro" id="IPR018261">
    <property type="entry name" value="Ribosomal_bL27_CS"/>
</dbReference>
<dbReference type="NCBIfam" id="TIGR00062">
    <property type="entry name" value="L27"/>
    <property type="match status" value="1"/>
</dbReference>
<dbReference type="PANTHER" id="PTHR15893:SF0">
    <property type="entry name" value="LARGE RIBOSOMAL SUBUNIT PROTEIN BL27M"/>
    <property type="match status" value="1"/>
</dbReference>
<dbReference type="PANTHER" id="PTHR15893">
    <property type="entry name" value="RIBOSOMAL PROTEIN L27"/>
    <property type="match status" value="1"/>
</dbReference>
<dbReference type="Pfam" id="PF01016">
    <property type="entry name" value="Ribosomal_L27"/>
    <property type="match status" value="1"/>
</dbReference>
<dbReference type="PRINTS" id="PR00063">
    <property type="entry name" value="RIBOSOMALL27"/>
</dbReference>
<dbReference type="SUPFAM" id="SSF110324">
    <property type="entry name" value="Ribosomal L27 protein-like"/>
    <property type="match status" value="1"/>
</dbReference>
<dbReference type="PROSITE" id="PS00831">
    <property type="entry name" value="RIBOSOMAL_L27"/>
    <property type="match status" value="1"/>
</dbReference>
<reference key="1">
    <citation type="journal article" date="2010" name="J. Bacteriol.">
        <title>Whole genome sequences of two Xylella fastidiosa strains (M12 and M23) causing almond leaf scorch disease in California.</title>
        <authorList>
            <person name="Chen J."/>
            <person name="Xie G."/>
            <person name="Han S."/>
            <person name="Chertkov O."/>
            <person name="Sims D."/>
            <person name="Civerolo E.L."/>
        </authorList>
    </citation>
    <scope>NUCLEOTIDE SEQUENCE [LARGE SCALE GENOMIC DNA]</scope>
    <source>
        <strain>M23</strain>
    </source>
</reference>
<organism>
    <name type="scientific">Xylella fastidiosa (strain M23)</name>
    <dbReference type="NCBI Taxonomy" id="405441"/>
    <lineage>
        <taxon>Bacteria</taxon>
        <taxon>Pseudomonadati</taxon>
        <taxon>Pseudomonadota</taxon>
        <taxon>Gammaproteobacteria</taxon>
        <taxon>Lysobacterales</taxon>
        <taxon>Lysobacteraceae</taxon>
        <taxon>Xylella</taxon>
    </lineage>
</organism>
<name>RL27_XYLF2</name>
<accession>B2I6V7</accession>
<evidence type="ECO:0000255" key="1">
    <source>
        <dbReference type="HAMAP-Rule" id="MF_00539"/>
    </source>
</evidence>
<evidence type="ECO:0000305" key="2"/>
<comment type="similarity">
    <text evidence="1">Belongs to the bacterial ribosomal protein bL27 family.</text>
</comment>
<feature type="chain" id="PRO_1000128829" description="Large ribosomal subunit protein bL27">
    <location>
        <begin position="1"/>
        <end position="85"/>
    </location>
</feature>
<protein>
    <recommendedName>
        <fullName evidence="1">Large ribosomal subunit protein bL27</fullName>
    </recommendedName>
    <alternativeName>
        <fullName evidence="2">50S ribosomal protein L27</fullName>
    </alternativeName>
</protein>